<reference key="1">
    <citation type="journal article" date="2004" name="Proc. Natl. Acad. Sci. U.S.A.">
        <title>Genome sequence of the deep-sea gamma-proteobacterium Idiomarina loihiensis reveals amino acid fermentation as a source of carbon and energy.</title>
        <authorList>
            <person name="Hou S."/>
            <person name="Saw J.H."/>
            <person name="Lee K.S."/>
            <person name="Freitas T.A."/>
            <person name="Belisle C."/>
            <person name="Kawarabayasi Y."/>
            <person name="Donachie S.P."/>
            <person name="Pikina A."/>
            <person name="Galperin M.Y."/>
            <person name="Koonin E.V."/>
            <person name="Makarova K.S."/>
            <person name="Omelchenko M.V."/>
            <person name="Sorokin A."/>
            <person name="Wolf Y.I."/>
            <person name="Li Q.X."/>
            <person name="Keum Y.S."/>
            <person name="Campbell S."/>
            <person name="Denery J."/>
            <person name="Aizawa S."/>
            <person name="Shibata S."/>
            <person name="Malahoff A."/>
            <person name="Alam M."/>
        </authorList>
    </citation>
    <scope>NUCLEOTIDE SEQUENCE [LARGE SCALE GENOMIC DNA]</scope>
    <source>
        <strain>ATCC BAA-735 / DSM 15497 / L2-TR</strain>
    </source>
</reference>
<feature type="signal peptide" evidence="1">
    <location>
        <begin position="1"/>
        <end position="21"/>
    </location>
</feature>
<feature type="chain" id="PRO_0000353946" description="Membrane-bound lytic murein transglycosylase F">
    <location>
        <begin position="22"/>
        <end position="455"/>
    </location>
</feature>
<feature type="region of interest" description="Non-LT domain" evidence="1">
    <location>
        <begin position="22"/>
        <end position="264"/>
    </location>
</feature>
<feature type="region of interest" description="LT domain" evidence="1">
    <location>
        <begin position="265"/>
        <end position="455"/>
    </location>
</feature>
<feature type="active site" evidence="1">
    <location>
        <position position="309"/>
    </location>
</feature>
<sequence>MPKSAVSLFAILLLAASVITACSPQTRPDAMSVVQERQVLRVGTLINPTSYYFDHDREQGFEYDLAKRFADRLGVELEMVPRFDVNDLFTMLRRGEVDIVAAGLDRTSTRAQLFRFSPPYDIISQKVVFKQGSRQRPRDLQQITDGEIVVVEGSSHHEFLKSLGDSIPTLKWRATRDHDAVELLQMVISGEVDYTITDSTALDIQRRFHPDLSVAFTVKHDQDIAWALPQGKDDSLFAAVIEYFGEIRSSGRLAHIKEQHFGHVKQFNYVTTSLFIEAVEQVLPGYIETFKEHSGSLDWRLLAAISYQESLWNPRAVSPTGVRGMMMLTLPTAKAMGVKSRLNAEQSIRGGARYLERMLNRVPARIPQPDRTWFAIAAYNIGFGHLEDARIITERQGGNPDRWVDVKKRLPLLRQKQFYRHTRYGFARGDEPVTYVGNIRRFYDTLKYLDEQGRL</sequence>
<accession>Q5QWY4</accession>
<protein>
    <recommendedName>
        <fullName evidence="1">Membrane-bound lytic murein transglycosylase F</fullName>
        <ecNumber evidence="1">4.2.2.n1</ecNumber>
    </recommendedName>
    <alternativeName>
        <fullName evidence="1">Murein lyase F</fullName>
    </alternativeName>
</protein>
<evidence type="ECO:0000255" key="1">
    <source>
        <dbReference type="HAMAP-Rule" id="MF_02016"/>
    </source>
</evidence>
<keyword id="KW-0998">Cell outer membrane</keyword>
<keyword id="KW-0961">Cell wall biogenesis/degradation</keyword>
<keyword id="KW-0456">Lyase</keyword>
<keyword id="KW-0472">Membrane</keyword>
<keyword id="KW-1185">Reference proteome</keyword>
<keyword id="KW-0732">Signal</keyword>
<gene>
    <name evidence="1" type="primary">mltF</name>
    <name type="ordered locus">IL0587</name>
</gene>
<comment type="function">
    <text evidence="1">Murein-degrading enzyme that degrades murein glycan strands and insoluble, high-molecular weight murein sacculi, with the concomitant formation of a 1,6-anhydromuramoyl product. Lytic transglycosylases (LTs) play an integral role in the metabolism of the peptidoglycan (PG) sacculus. Their lytic action creates space within the PG sacculus to allow for its expansion as well as for the insertion of various structures such as secretion systems and flagella.</text>
</comment>
<comment type="catalytic activity">
    <reaction evidence="1">
        <text>Exolytic cleavage of the (1-&gt;4)-beta-glycosidic linkage between N-acetylmuramic acid (MurNAc) and N-acetylglucosamine (GlcNAc) residues in peptidoglycan, from either the reducing or the non-reducing ends of the peptidoglycan chains, with concomitant formation of a 1,6-anhydrobond in the MurNAc residue.</text>
        <dbReference type="EC" id="4.2.2.n1"/>
    </reaction>
</comment>
<comment type="subcellular location">
    <subcellularLocation>
        <location>Cell outer membrane</location>
        <topology>Peripheral membrane protein</topology>
    </subcellularLocation>
    <text evidence="1">Attached to the inner leaflet of the outer membrane.</text>
</comment>
<comment type="domain">
    <text evidence="1">The N-terminal domain does not have lytic activity and probably modulates enzymatic activity. The C-terminal domain is the catalytic active domain.</text>
</comment>
<comment type="similarity">
    <text evidence="1">In the N-terminal section; belongs to the bacterial solute-binding protein 3 family.</text>
</comment>
<comment type="similarity">
    <text evidence="1">In the C-terminal section; belongs to the transglycosylase Slt family.</text>
</comment>
<proteinExistence type="inferred from homology"/>
<organism>
    <name type="scientific">Idiomarina loihiensis (strain ATCC BAA-735 / DSM 15497 / L2-TR)</name>
    <dbReference type="NCBI Taxonomy" id="283942"/>
    <lineage>
        <taxon>Bacteria</taxon>
        <taxon>Pseudomonadati</taxon>
        <taxon>Pseudomonadota</taxon>
        <taxon>Gammaproteobacteria</taxon>
        <taxon>Alteromonadales</taxon>
        <taxon>Idiomarinaceae</taxon>
        <taxon>Idiomarina</taxon>
    </lineage>
</organism>
<dbReference type="EC" id="4.2.2.n1" evidence="1"/>
<dbReference type="EMBL" id="AE017340">
    <property type="protein sequence ID" value="AAV81428.1"/>
    <property type="molecule type" value="Genomic_DNA"/>
</dbReference>
<dbReference type="RefSeq" id="WP_011233844.1">
    <property type="nucleotide sequence ID" value="NC_006512.1"/>
</dbReference>
<dbReference type="SMR" id="Q5QWY4"/>
<dbReference type="STRING" id="283942.IL0587"/>
<dbReference type="CAZy" id="GH23">
    <property type="family name" value="Glycoside Hydrolase Family 23"/>
</dbReference>
<dbReference type="GeneID" id="41335738"/>
<dbReference type="KEGG" id="ilo:IL0587"/>
<dbReference type="eggNOG" id="COG4623">
    <property type="taxonomic scope" value="Bacteria"/>
</dbReference>
<dbReference type="HOGENOM" id="CLU_027494_0_1_6"/>
<dbReference type="OrthoDB" id="9815002at2"/>
<dbReference type="Proteomes" id="UP000001171">
    <property type="component" value="Chromosome"/>
</dbReference>
<dbReference type="GO" id="GO:0009279">
    <property type="term" value="C:cell outer membrane"/>
    <property type="evidence" value="ECO:0007669"/>
    <property type="project" value="UniProtKB-SubCell"/>
</dbReference>
<dbReference type="GO" id="GO:0008933">
    <property type="term" value="F:peptidoglycan lytic transglycosylase activity"/>
    <property type="evidence" value="ECO:0007669"/>
    <property type="project" value="UniProtKB-UniRule"/>
</dbReference>
<dbReference type="GO" id="GO:0016998">
    <property type="term" value="P:cell wall macromolecule catabolic process"/>
    <property type="evidence" value="ECO:0007669"/>
    <property type="project" value="UniProtKB-UniRule"/>
</dbReference>
<dbReference type="GO" id="GO:0071555">
    <property type="term" value="P:cell wall organization"/>
    <property type="evidence" value="ECO:0007669"/>
    <property type="project" value="UniProtKB-KW"/>
</dbReference>
<dbReference type="GO" id="GO:0009253">
    <property type="term" value="P:peptidoglycan catabolic process"/>
    <property type="evidence" value="ECO:0007669"/>
    <property type="project" value="TreeGrafter"/>
</dbReference>
<dbReference type="CDD" id="cd13403">
    <property type="entry name" value="MLTF-like"/>
    <property type="match status" value="1"/>
</dbReference>
<dbReference type="CDD" id="cd01009">
    <property type="entry name" value="PBP2_YfhD_N"/>
    <property type="match status" value="1"/>
</dbReference>
<dbReference type="Gene3D" id="1.10.530.10">
    <property type="match status" value="1"/>
</dbReference>
<dbReference type="Gene3D" id="3.40.190.10">
    <property type="entry name" value="Periplasmic binding protein-like II"/>
    <property type="match status" value="2"/>
</dbReference>
<dbReference type="HAMAP" id="MF_02016">
    <property type="entry name" value="MltF"/>
    <property type="match status" value="1"/>
</dbReference>
<dbReference type="InterPro" id="IPR023346">
    <property type="entry name" value="Lysozyme-like_dom_sf"/>
</dbReference>
<dbReference type="InterPro" id="IPR023703">
    <property type="entry name" value="MltF"/>
</dbReference>
<dbReference type="InterPro" id="IPR001638">
    <property type="entry name" value="Solute-binding_3/MltF_N"/>
</dbReference>
<dbReference type="InterPro" id="IPR000189">
    <property type="entry name" value="Transglyc_AS"/>
</dbReference>
<dbReference type="InterPro" id="IPR008258">
    <property type="entry name" value="Transglycosylase_SLT_dom_1"/>
</dbReference>
<dbReference type="NCBIfam" id="NF008112">
    <property type="entry name" value="PRK10859.1"/>
    <property type="match status" value="1"/>
</dbReference>
<dbReference type="PANTHER" id="PTHR35936">
    <property type="entry name" value="MEMBRANE-BOUND LYTIC MUREIN TRANSGLYCOSYLASE F"/>
    <property type="match status" value="1"/>
</dbReference>
<dbReference type="PANTHER" id="PTHR35936:SF32">
    <property type="entry name" value="MEMBRANE-BOUND LYTIC MUREIN TRANSGLYCOSYLASE F"/>
    <property type="match status" value="1"/>
</dbReference>
<dbReference type="Pfam" id="PF00497">
    <property type="entry name" value="SBP_bac_3"/>
    <property type="match status" value="1"/>
</dbReference>
<dbReference type="Pfam" id="PF01464">
    <property type="entry name" value="SLT"/>
    <property type="match status" value="1"/>
</dbReference>
<dbReference type="SMART" id="SM00062">
    <property type="entry name" value="PBPb"/>
    <property type="match status" value="1"/>
</dbReference>
<dbReference type="SUPFAM" id="SSF53955">
    <property type="entry name" value="Lysozyme-like"/>
    <property type="match status" value="1"/>
</dbReference>
<dbReference type="SUPFAM" id="SSF53850">
    <property type="entry name" value="Periplasmic binding protein-like II"/>
    <property type="match status" value="1"/>
</dbReference>
<dbReference type="PROSITE" id="PS51257">
    <property type="entry name" value="PROKAR_LIPOPROTEIN"/>
    <property type="match status" value="1"/>
</dbReference>
<dbReference type="PROSITE" id="PS00922">
    <property type="entry name" value="TRANSGLYCOSYLASE"/>
    <property type="match status" value="1"/>
</dbReference>
<name>MLTF_IDILO</name>